<name>DEF_KARMG</name>
<dbReference type="EC" id="3.5.1.88" evidence="1"/>
<dbReference type="EMBL" id="CP000770">
    <property type="protein sequence ID" value="ABS30510.1"/>
    <property type="molecule type" value="Genomic_DNA"/>
</dbReference>
<dbReference type="SMR" id="A8Z5V9"/>
<dbReference type="STRING" id="444179.SMGWSS_095"/>
<dbReference type="KEGG" id="smg:SMGWSS_095"/>
<dbReference type="HOGENOM" id="CLU_061901_2_0_10"/>
<dbReference type="Proteomes" id="UP000000781">
    <property type="component" value="Chromosome"/>
</dbReference>
<dbReference type="GO" id="GO:0046872">
    <property type="term" value="F:metal ion binding"/>
    <property type="evidence" value="ECO:0007669"/>
    <property type="project" value="UniProtKB-KW"/>
</dbReference>
<dbReference type="GO" id="GO:0042586">
    <property type="term" value="F:peptide deformylase activity"/>
    <property type="evidence" value="ECO:0007669"/>
    <property type="project" value="UniProtKB-UniRule"/>
</dbReference>
<dbReference type="GO" id="GO:0043686">
    <property type="term" value="P:co-translational protein modification"/>
    <property type="evidence" value="ECO:0007669"/>
    <property type="project" value="TreeGrafter"/>
</dbReference>
<dbReference type="GO" id="GO:0006412">
    <property type="term" value="P:translation"/>
    <property type="evidence" value="ECO:0007669"/>
    <property type="project" value="UniProtKB-UniRule"/>
</dbReference>
<dbReference type="CDD" id="cd00487">
    <property type="entry name" value="Pep_deformylase"/>
    <property type="match status" value="1"/>
</dbReference>
<dbReference type="Gene3D" id="3.90.45.10">
    <property type="entry name" value="Peptide deformylase"/>
    <property type="match status" value="1"/>
</dbReference>
<dbReference type="HAMAP" id="MF_00163">
    <property type="entry name" value="Pep_deformylase"/>
    <property type="match status" value="1"/>
</dbReference>
<dbReference type="InterPro" id="IPR023635">
    <property type="entry name" value="Peptide_deformylase"/>
</dbReference>
<dbReference type="InterPro" id="IPR036821">
    <property type="entry name" value="Peptide_deformylase_sf"/>
</dbReference>
<dbReference type="NCBIfam" id="TIGR00079">
    <property type="entry name" value="pept_deformyl"/>
    <property type="match status" value="1"/>
</dbReference>
<dbReference type="NCBIfam" id="NF001159">
    <property type="entry name" value="PRK00150.1-3"/>
    <property type="match status" value="1"/>
</dbReference>
<dbReference type="PANTHER" id="PTHR10458">
    <property type="entry name" value="PEPTIDE DEFORMYLASE"/>
    <property type="match status" value="1"/>
</dbReference>
<dbReference type="PANTHER" id="PTHR10458:SF22">
    <property type="entry name" value="PEPTIDE DEFORMYLASE"/>
    <property type="match status" value="1"/>
</dbReference>
<dbReference type="Pfam" id="PF01327">
    <property type="entry name" value="Pep_deformylase"/>
    <property type="match status" value="1"/>
</dbReference>
<dbReference type="PIRSF" id="PIRSF004749">
    <property type="entry name" value="Pep_def"/>
    <property type="match status" value="1"/>
</dbReference>
<dbReference type="PRINTS" id="PR01576">
    <property type="entry name" value="PDEFORMYLASE"/>
</dbReference>
<dbReference type="SUPFAM" id="SSF56420">
    <property type="entry name" value="Peptide deformylase"/>
    <property type="match status" value="1"/>
</dbReference>
<organism>
    <name type="scientific">Karelsulcia muelleri (strain GWSS)</name>
    <name type="common">Sulcia muelleri</name>
    <dbReference type="NCBI Taxonomy" id="444179"/>
    <lineage>
        <taxon>Bacteria</taxon>
        <taxon>Pseudomonadati</taxon>
        <taxon>Bacteroidota</taxon>
        <taxon>Flavobacteriia</taxon>
        <taxon>Flavobacteriales</taxon>
        <taxon>Candidatus Karelsulcia</taxon>
    </lineage>
</organism>
<sequence>MILPIIIYGNSFLRKKCIEIDKSYKDINFLINNMYDTMYQAKGIGLSAPQIGLSIRLFIIEYNNFLKQKFKKVFINPIIIKKYGYNLISKEGCLSIPNIIENIKRKNNIIIEYYDENWKKYKQHFNGLLSIIIQHEYDHIEGKLFIDNIFILKNILIKKNFNLNYNLYKLYKLSKLYKFYLIYRSRYRI</sequence>
<comment type="function">
    <text evidence="1">Removes the formyl group from the N-terminal Met of newly synthesized proteins. Requires at least a dipeptide for an efficient rate of reaction. N-terminal L-methionine is a prerequisite for activity but the enzyme has broad specificity at other positions.</text>
</comment>
<comment type="catalytic activity">
    <reaction evidence="1">
        <text>N-terminal N-formyl-L-methionyl-[peptide] + H2O = N-terminal L-methionyl-[peptide] + formate</text>
        <dbReference type="Rhea" id="RHEA:24420"/>
        <dbReference type="Rhea" id="RHEA-COMP:10639"/>
        <dbReference type="Rhea" id="RHEA-COMP:10640"/>
        <dbReference type="ChEBI" id="CHEBI:15377"/>
        <dbReference type="ChEBI" id="CHEBI:15740"/>
        <dbReference type="ChEBI" id="CHEBI:49298"/>
        <dbReference type="ChEBI" id="CHEBI:64731"/>
        <dbReference type="EC" id="3.5.1.88"/>
    </reaction>
</comment>
<comment type="cofactor">
    <cofactor evidence="1">
        <name>Fe(2+)</name>
        <dbReference type="ChEBI" id="CHEBI:29033"/>
    </cofactor>
    <text evidence="1">Binds 1 Fe(2+) ion.</text>
</comment>
<comment type="similarity">
    <text evidence="1">Belongs to the polypeptide deformylase family.</text>
</comment>
<proteinExistence type="inferred from homology"/>
<evidence type="ECO:0000255" key="1">
    <source>
        <dbReference type="HAMAP-Rule" id="MF_00163"/>
    </source>
</evidence>
<keyword id="KW-0378">Hydrolase</keyword>
<keyword id="KW-0408">Iron</keyword>
<keyword id="KW-0479">Metal-binding</keyword>
<keyword id="KW-0648">Protein biosynthesis</keyword>
<accession>A8Z5V9</accession>
<feature type="chain" id="PRO_1000076953" description="Peptide deformylase">
    <location>
        <begin position="1"/>
        <end position="189"/>
    </location>
</feature>
<feature type="active site" evidence="1">
    <location>
        <position position="136"/>
    </location>
</feature>
<feature type="binding site" evidence="1">
    <location>
        <position position="93"/>
    </location>
    <ligand>
        <name>Fe cation</name>
        <dbReference type="ChEBI" id="CHEBI:24875"/>
    </ligand>
</feature>
<feature type="binding site" evidence="1">
    <location>
        <position position="135"/>
    </location>
    <ligand>
        <name>Fe cation</name>
        <dbReference type="ChEBI" id="CHEBI:24875"/>
    </ligand>
</feature>
<feature type="binding site" evidence="1">
    <location>
        <position position="139"/>
    </location>
    <ligand>
        <name>Fe cation</name>
        <dbReference type="ChEBI" id="CHEBI:24875"/>
    </ligand>
</feature>
<protein>
    <recommendedName>
        <fullName evidence="1">Peptide deformylase</fullName>
        <shortName evidence="1">PDF</shortName>
        <ecNumber evidence="1">3.5.1.88</ecNumber>
    </recommendedName>
    <alternativeName>
        <fullName evidence="1">Polypeptide deformylase</fullName>
    </alternativeName>
</protein>
<gene>
    <name evidence="1" type="primary">def</name>
    <name type="ordered locus">SMGWSS_095</name>
</gene>
<reference key="1">
    <citation type="journal article" date="2007" name="Proc. Natl. Acad. Sci. U.S.A.">
        <title>Parallel genomic evolution and metabolic interdependence in an ancient symbiosis.</title>
        <authorList>
            <person name="McCutcheon J.P."/>
            <person name="Moran N.A."/>
        </authorList>
    </citation>
    <scope>NUCLEOTIDE SEQUENCE [LARGE SCALE GENOMIC DNA]</scope>
    <source>
        <strain>GWSS</strain>
    </source>
</reference>